<feature type="chain" id="PRO_1000058318" description="Arginine repressor">
    <location>
        <begin position="1"/>
        <end position="149"/>
    </location>
</feature>
<keyword id="KW-0028">Amino-acid biosynthesis</keyword>
<keyword id="KW-0055">Arginine biosynthesis</keyword>
<keyword id="KW-0963">Cytoplasm</keyword>
<keyword id="KW-0238">DNA-binding</keyword>
<keyword id="KW-1185">Reference proteome</keyword>
<keyword id="KW-0678">Repressor</keyword>
<keyword id="KW-0804">Transcription</keyword>
<keyword id="KW-0805">Transcription regulation</keyword>
<sequence>MKYSRHAKILEIIDTMEIETQEELSEELRKIGFNVTQATVSRDIKELRLIKVLSKSGNYKYATLRSQENVLSDRLVRLFKDSILSIEYAGNIMVMKTLAGAAQAAASAIDAVDLKGVMGTIAGDDTIFVVVRDQDQMQEIEEKFRRLTK</sequence>
<accession>A6TR45</accession>
<dbReference type="EMBL" id="CP000724">
    <property type="protein sequence ID" value="ABR48663.1"/>
    <property type="molecule type" value="Genomic_DNA"/>
</dbReference>
<dbReference type="RefSeq" id="WP_012063638.1">
    <property type="nucleotide sequence ID" value="NC_009633.1"/>
</dbReference>
<dbReference type="SMR" id="A6TR45"/>
<dbReference type="STRING" id="293826.Amet_2510"/>
<dbReference type="KEGG" id="amt:Amet_2510"/>
<dbReference type="eggNOG" id="COG1438">
    <property type="taxonomic scope" value="Bacteria"/>
</dbReference>
<dbReference type="HOGENOM" id="CLU_097103_3_0_9"/>
<dbReference type="OrthoDB" id="9807089at2"/>
<dbReference type="UniPathway" id="UPA00068"/>
<dbReference type="Proteomes" id="UP000001572">
    <property type="component" value="Chromosome"/>
</dbReference>
<dbReference type="GO" id="GO:0005737">
    <property type="term" value="C:cytoplasm"/>
    <property type="evidence" value="ECO:0007669"/>
    <property type="project" value="UniProtKB-SubCell"/>
</dbReference>
<dbReference type="GO" id="GO:0034618">
    <property type="term" value="F:arginine binding"/>
    <property type="evidence" value="ECO:0007669"/>
    <property type="project" value="InterPro"/>
</dbReference>
<dbReference type="GO" id="GO:0003677">
    <property type="term" value="F:DNA binding"/>
    <property type="evidence" value="ECO:0007669"/>
    <property type="project" value="UniProtKB-KW"/>
</dbReference>
<dbReference type="GO" id="GO:0003700">
    <property type="term" value="F:DNA-binding transcription factor activity"/>
    <property type="evidence" value="ECO:0007669"/>
    <property type="project" value="UniProtKB-UniRule"/>
</dbReference>
<dbReference type="GO" id="GO:0006526">
    <property type="term" value="P:L-arginine biosynthetic process"/>
    <property type="evidence" value="ECO:0007669"/>
    <property type="project" value="UniProtKB-UniPathway"/>
</dbReference>
<dbReference type="GO" id="GO:0051259">
    <property type="term" value="P:protein complex oligomerization"/>
    <property type="evidence" value="ECO:0007669"/>
    <property type="project" value="InterPro"/>
</dbReference>
<dbReference type="GO" id="GO:1900079">
    <property type="term" value="P:regulation of arginine biosynthetic process"/>
    <property type="evidence" value="ECO:0007669"/>
    <property type="project" value="UniProtKB-UniRule"/>
</dbReference>
<dbReference type="Gene3D" id="3.30.1360.40">
    <property type="match status" value="1"/>
</dbReference>
<dbReference type="Gene3D" id="1.10.10.10">
    <property type="entry name" value="Winged helix-like DNA-binding domain superfamily/Winged helix DNA-binding domain"/>
    <property type="match status" value="1"/>
</dbReference>
<dbReference type="HAMAP" id="MF_00173">
    <property type="entry name" value="Arg_repressor"/>
    <property type="match status" value="1"/>
</dbReference>
<dbReference type="InterPro" id="IPR001669">
    <property type="entry name" value="Arg_repress"/>
</dbReference>
<dbReference type="InterPro" id="IPR020899">
    <property type="entry name" value="Arg_repress_C"/>
</dbReference>
<dbReference type="InterPro" id="IPR036251">
    <property type="entry name" value="Arg_repress_C_sf"/>
</dbReference>
<dbReference type="InterPro" id="IPR020900">
    <property type="entry name" value="Arg_repress_DNA-bd"/>
</dbReference>
<dbReference type="InterPro" id="IPR036388">
    <property type="entry name" value="WH-like_DNA-bd_sf"/>
</dbReference>
<dbReference type="InterPro" id="IPR036390">
    <property type="entry name" value="WH_DNA-bd_sf"/>
</dbReference>
<dbReference type="NCBIfam" id="TIGR01529">
    <property type="entry name" value="argR_whole"/>
    <property type="match status" value="1"/>
</dbReference>
<dbReference type="NCBIfam" id="NF001680">
    <property type="entry name" value="PRK00441.1"/>
    <property type="match status" value="1"/>
</dbReference>
<dbReference type="PANTHER" id="PTHR34471">
    <property type="entry name" value="ARGININE REPRESSOR"/>
    <property type="match status" value="1"/>
</dbReference>
<dbReference type="PANTHER" id="PTHR34471:SF1">
    <property type="entry name" value="ARGININE REPRESSOR"/>
    <property type="match status" value="1"/>
</dbReference>
<dbReference type="Pfam" id="PF01316">
    <property type="entry name" value="Arg_repressor"/>
    <property type="match status" value="1"/>
</dbReference>
<dbReference type="Pfam" id="PF02863">
    <property type="entry name" value="Arg_repressor_C"/>
    <property type="match status" value="1"/>
</dbReference>
<dbReference type="PRINTS" id="PR01467">
    <property type="entry name" value="ARGREPRESSOR"/>
</dbReference>
<dbReference type="SUPFAM" id="SSF55252">
    <property type="entry name" value="C-terminal domain of arginine repressor"/>
    <property type="match status" value="1"/>
</dbReference>
<dbReference type="SUPFAM" id="SSF46785">
    <property type="entry name" value="Winged helix' DNA-binding domain"/>
    <property type="match status" value="1"/>
</dbReference>
<gene>
    <name evidence="1" type="primary">argR</name>
    <name type="ordered locus">Amet_2510</name>
</gene>
<comment type="function">
    <text evidence="1">Regulates arginine biosynthesis genes.</text>
</comment>
<comment type="pathway">
    <text>Amino-acid biosynthesis; L-arginine biosynthesis [regulation].</text>
</comment>
<comment type="subcellular location">
    <subcellularLocation>
        <location evidence="1">Cytoplasm</location>
    </subcellularLocation>
</comment>
<comment type="similarity">
    <text evidence="1">Belongs to the ArgR family.</text>
</comment>
<organism>
    <name type="scientific">Alkaliphilus metalliredigens (strain QYMF)</name>
    <dbReference type="NCBI Taxonomy" id="293826"/>
    <lineage>
        <taxon>Bacteria</taxon>
        <taxon>Bacillati</taxon>
        <taxon>Bacillota</taxon>
        <taxon>Clostridia</taxon>
        <taxon>Peptostreptococcales</taxon>
        <taxon>Natronincolaceae</taxon>
        <taxon>Alkaliphilus</taxon>
    </lineage>
</organism>
<protein>
    <recommendedName>
        <fullName evidence="1">Arginine repressor</fullName>
    </recommendedName>
</protein>
<evidence type="ECO:0000255" key="1">
    <source>
        <dbReference type="HAMAP-Rule" id="MF_00173"/>
    </source>
</evidence>
<proteinExistence type="inferred from homology"/>
<name>ARGR_ALKMQ</name>
<reference key="1">
    <citation type="journal article" date="2016" name="Genome Announc.">
        <title>Complete genome sequence of Alkaliphilus metalliredigens strain QYMF, an alkaliphilic and metal-reducing bacterium isolated from borax-contaminated leachate ponds.</title>
        <authorList>
            <person name="Hwang C."/>
            <person name="Copeland A."/>
            <person name="Lucas S."/>
            <person name="Lapidus A."/>
            <person name="Barry K."/>
            <person name="Detter J.C."/>
            <person name="Glavina Del Rio T."/>
            <person name="Hammon N."/>
            <person name="Israni S."/>
            <person name="Dalin E."/>
            <person name="Tice H."/>
            <person name="Pitluck S."/>
            <person name="Chertkov O."/>
            <person name="Brettin T."/>
            <person name="Bruce D."/>
            <person name="Han C."/>
            <person name="Schmutz J."/>
            <person name="Larimer F."/>
            <person name="Land M.L."/>
            <person name="Hauser L."/>
            <person name="Kyrpides N."/>
            <person name="Mikhailova N."/>
            <person name="Ye Q."/>
            <person name="Zhou J."/>
            <person name="Richardson P."/>
            <person name="Fields M.W."/>
        </authorList>
    </citation>
    <scope>NUCLEOTIDE SEQUENCE [LARGE SCALE GENOMIC DNA]</scope>
    <source>
        <strain>QYMF</strain>
    </source>
</reference>